<reference key="1">
    <citation type="journal article" date="2006" name="Science">
        <title>Genome of rice cluster I archaea -- the key methane producers in the rice rhizosphere.</title>
        <authorList>
            <person name="Erkel C."/>
            <person name="Kube M."/>
            <person name="Reinhardt R."/>
            <person name="Liesack W."/>
        </authorList>
    </citation>
    <scope>NUCLEOTIDE SEQUENCE [LARGE SCALE GENOMIC DNA]</scope>
    <source>
        <strain>DSM 22066 / NBRC 105507 / MRE50</strain>
    </source>
</reference>
<dbReference type="EC" id="3.5.4.19" evidence="1"/>
<dbReference type="EMBL" id="AM114193">
    <property type="protein sequence ID" value="CAJ35540.1"/>
    <property type="molecule type" value="Genomic_DNA"/>
</dbReference>
<dbReference type="RefSeq" id="WP_012036954.1">
    <property type="nucleotide sequence ID" value="NC_009464.1"/>
</dbReference>
<dbReference type="SMR" id="Q0W7V3"/>
<dbReference type="STRING" id="351160.RCIX21"/>
<dbReference type="GeneID" id="5145650"/>
<dbReference type="KEGG" id="rci:RCIX21"/>
<dbReference type="PATRIC" id="fig|351160.9.peg.2697"/>
<dbReference type="eggNOG" id="arCOG02676">
    <property type="taxonomic scope" value="Archaea"/>
</dbReference>
<dbReference type="OrthoDB" id="5853at2157"/>
<dbReference type="UniPathway" id="UPA00031">
    <property type="reaction ID" value="UER00008"/>
</dbReference>
<dbReference type="Proteomes" id="UP000000663">
    <property type="component" value="Chromosome"/>
</dbReference>
<dbReference type="GO" id="GO:0005737">
    <property type="term" value="C:cytoplasm"/>
    <property type="evidence" value="ECO:0007669"/>
    <property type="project" value="UniProtKB-SubCell"/>
</dbReference>
<dbReference type="GO" id="GO:0000287">
    <property type="term" value="F:magnesium ion binding"/>
    <property type="evidence" value="ECO:0007669"/>
    <property type="project" value="UniProtKB-UniRule"/>
</dbReference>
<dbReference type="GO" id="GO:0004635">
    <property type="term" value="F:phosphoribosyl-AMP cyclohydrolase activity"/>
    <property type="evidence" value="ECO:0007669"/>
    <property type="project" value="UniProtKB-UniRule"/>
</dbReference>
<dbReference type="GO" id="GO:0008270">
    <property type="term" value="F:zinc ion binding"/>
    <property type="evidence" value="ECO:0007669"/>
    <property type="project" value="UniProtKB-UniRule"/>
</dbReference>
<dbReference type="GO" id="GO:0000105">
    <property type="term" value="P:L-histidine biosynthetic process"/>
    <property type="evidence" value="ECO:0007669"/>
    <property type="project" value="UniProtKB-UniRule"/>
</dbReference>
<dbReference type="FunFam" id="3.10.20.810:FF:000001">
    <property type="entry name" value="Histidine biosynthesis bifunctional protein HisIE"/>
    <property type="match status" value="1"/>
</dbReference>
<dbReference type="Gene3D" id="4.10.80.70">
    <property type="match status" value="1"/>
</dbReference>
<dbReference type="Gene3D" id="3.10.20.810">
    <property type="entry name" value="Phosphoribosyl-AMP cyclohydrolase"/>
    <property type="match status" value="1"/>
</dbReference>
<dbReference type="HAMAP" id="MF_01021">
    <property type="entry name" value="HisI"/>
    <property type="match status" value="1"/>
</dbReference>
<dbReference type="InterPro" id="IPR026660">
    <property type="entry name" value="PRA-CH"/>
</dbReference>
<dbReference type="InterPro" id="IPR002496">
    <property type="entry name" value="PRib_AMP_CycHydrolase_dom"/>
</dbReference>
<dbReference type="InterPro" id="IPR038019">
    <property type="entry name" value="PRib_AMP_CycHydrolase_sf"/>
</dbReference>
<dbReference type="NCBIfam" id="NF000768">
    <property type="entry name" value="PRK00051.1"/>
    <property type="match status" value="1"/>
</dbReference>
<dbReference type="PANTHER" id="PTHR42945">
    <property type="entry name" value="HISTIDINE BIOSYNTHESIS BIFUNCTIONAL PROTEIN"/>
    <property type="match status" value="1"/>
</dbReference>
<dbReference type="PANTHER" id="PTHR42945:SF1">
    <property type="entry name" value="HISTIDINE BIOSYNTHESIS BIFUNCTIONAL PROTEIN HIS7"/>
    <property type="match status" value="1"/>
</dbReference>
<dbReference type="Pfam" id="PF01502">
    <property type="entry name" value="PRA-CH"/>
    <property type="match status" value="1"/>
</dbReference>
<dbReference type="SUPFAM" id="SSF141734">
    <property type="entry name" value="HisI-like"/>
    <property type="match status" value="1"/>
</dbReference>
<sequence>MIEPEFKDGLLPVIVQDYETLEVLMFAYMNREAFDLTCSTGIAHYFSRSRGKLWKKGETSGHYQHVKEMRIDCDRDCLLILVEQDTGACHTGYRSCFYRTIEGDVVGEKTFEPADVYKN</sequence>
<proteinExistence type="inferred from homology"/>
<evidence type="ECO:0000255" key="1">
    <source>
        <dbReference type="HAMAP-Rule" id="MF_01021"/>
    </source>
</evidence>
<accession>Q0W7V3</accession>
<feature type="chain" id="PRO_0000319735" description="Phosphoribosyl-AMP cyclohydrolase">
    <location>
        <begin position="1"/>
        <end position="119"/>
    </location>
</feature>
<feature type="binding site" evidence="1">
    <location>
        <position position="72"/>
    </location>
    <ligand>
        <name>Mg(2+)</name>
        <dbReference type="ChEBI" id="CHEBI:18420"/>
    </ligand>
</feature>
<feature type="binding site" evidence="1">
    <location>
        <position position="73"/>
    </location>
    <ligand>
        <name>Zn(2+)</name>
        <dbReference type="ChEBI" id="CHEBI:29105"/>
        <note>ligand shared between dimeric partners</note>
    </ligand>
</feature>
<feature type="binding site" evidence="1">
    <location>
        <position position="74"/>
    </location>
    <ligand>
        <name>Mg(2+)</name>
        <dbReference type="ChEBI" id="CHEBI:18420"/>
    </ligand>
</feature>
<feature type="binding site" evidence="1">
    <location>
        <position position="76"/>
    </location>
    <ligand>
        <name>Mg(2+)</name>
        <dbReference type="ChEBI" id="CHEBI:18420"/>
    </ligand>
</feature>
<feature type="binding site" evidence="1">
    <location>
        <position position="89"/>
    </location>
    <ligand>
        <name>Zn(2+)</name>
        <dbReference type="ChEBI" id="CHEBI:29105"/>
        <note>ligand shared between dimeric partners</note>
    </ligand>
</feature>
<feature type="binding site" evidence="1">
    <location>
        <position position="96"/>
    </location>
    <ligand>
        <name>Zn(2+)</name>
        <dbReference type="ChEBI" id="CHEBI:29105"/>
        <note>ligand shared between dimeric partners</note>
    </ligand>
</feature>
<gene>
    <name evidence="1" type="primary">hisI</name>
    <name type="ordered locus">UNCMA_26380</name>
    <name type="ORF">RCIX21</name>
</gene>
<keyword id="KW-0028">Amino-acid biosynthesis</keyword>
<keyword id="KW-0963">Cytoplasm</keyword>
<keyword id="KW-0368">Histidine biosynthesis</keyword>
<keyword id="KW-0378">Hydrolase</keyword>
<keyword id="KW-0460">Magnesium</keyword>
<keyword id="KW-0479">Metal-binding</keyword>
<keyword id="KW-1185">Reference proteome</keyword>
<keyword id="KW-0862">Zinc</keyword>
<name>HIS3_METAR</name>
<organism>
    <name type="scientific">Methanocella arvoryzae (strain DSM 22066 / NBRC 105507 / MRE50)</name>
    <dbReference type="NCBI Taxonomy" id="351160"/>
    <lineage>
        <taxon>Archaea</taxon>
        <taxon>Methanobacteriati</taxon>
        <taxon>Methanobacteriota</taxon>
        <taxon>Stenosarchaea group</taxon>
        <taxon>Methanomicrobia</taxon>
        <taxon>Methanocellales</taxon>
        <taxon>Methanocellaceae</taxon>
        <taxon>Methanocella</taxon>
    </lineage>
</organism>
<comment type="function">
    <text evidence="1">Catalyzes the hydrolysis of the adenine ring of phosphoribosyl-AMP.</text>
</comment>
<comment type="catalytic activity">
    <reaction evidence="1">
        <text>1-(5-phospho-beta-D-ribosyl)-5'-AMP + H2O = 1-(5-phospho-beta-D-ribosyl)-5-[(5-phospho-beta-D-ribosylamino)methylideneamino]imidazole-4-carboxamide</text>
        <dbReference type="Rhea" id="RHEA:20049"/>
        <dbReference type="ChEBI" id="CHEBI:15377"/>
        <dbReference type="ChEBI" id="CHEBI:58435"/>
        <dbReference type="ChEBI" id="CHEBI:59457"/>
        <dbReference type="EC" id="3.5.4.19"/>
    </reaction>
</comment>
<comment type="cofactor">
    <cofactor evidence="1">
        <name>Mg(2+)</name>
        <dbReference type="ChEBI" id="CHEBI:18420"/>
    </cofactor>
    <text evidence="1">Binds 1 Mg(2+) ion per subunit.</text>
</comment>
<comment type="cofactor">
    <cofactor evidence="1">
        <name>Zn(2+)</name>
        <dbReference type="ChEBI" id="CHEBI:29105"/>
    </cofactor>
    <text evidence="1">Binds 1 zinc ion per subunit.</text>
</comment>
<comment type="pathway">
    <text evidence="1">Amino-acid biosynthesis; L-histidine biosynthesis; L-histidine from 5-phospho-alpha-D-ribose 1-diphosphate: step 3/9.</text>
</comment>
<comment type="subunit">
    <text evidence="1">Homodimer.</text>
</comment>
<comment type="subcellular location">
    <subcellularLocation>
        <location evidence="1">Cytoplasm</location>
    </subcellularLocation>
</comment>
<comment type="similarity">
    <text evidence="1">Belongs to the PRA-CH family.</text>
</comment>
<protein>
    <recommendedName>
        <fullName evidence="1">Phosphoribosyl-AMP cyclohydrolase</fullName>
        <shortName evidence="1">PRA-CH</shortName>
        <ecNumber evidence="1">3.5.4.19</ecNumber>
    </recommendedName>
</protein>